<protein>
    <recommendedName>
        <fullName>Phosphocarrier protein NPr</fullName>
    </recommendedName>
    <alternativeName>
        <fullName>Nitrogen-related HPr</fullName>
    </alternativeName>
</protein>
<name>PTSO_SHEVD</name>
<sequence length="91" mass="9490">MTKLERQVTICNKLGLHARAATKLAILASEFDAEITIVQGEKKASAASVLGLLMLETGMGKTITLLGKGQDADAALDAICALVDAKFDEAS</sequence>
<organism>
    <name type="scientific">Shewanella violacea (strain JCM 10179 / CIP 106290 / LMG 19151 / DSS12)</name>
    <dbReference type="NCBI Taxonomy" id="637905"/>
    <lineage>
        <taxon>Bacteria</taxon>
        <taxon>Pseudomonadati</taxon>
        <taxon>Pseudomonadota</taxon>
        <taxon>Gammaproteobacteria</taxon>
        <taxon>Alteromonadales</taxon>
        <taxon>Shewanellaceae</taxon>
        <taxon>Shewanella</taxon>
    </lineage>
</organism>
<dbReference type="EMBL" id="AB033988">
    <property type="protein sequence ID" value="BAA85889.1"/>
    <property type="molecule type" value="Genomic_DNA"/>
</dbReference>
<dbReference type="EMBL" id="AP011177">
    <property type="protein sequence ID" value="BAJ00381.1"/>
    <property type="molecule type" value="Genomic_DNA"/>
</dbReference>
<dbReference type="RefSeq" id="WP_013049695.1">
    <property type="nucleotide sequence ID" value="NC_014012.1"/>
</dbReference>
<dbReference type="SMR" id="Q9S0K8"/>
<dbReference type="STRING" id="637905.SVI_0410"/>
<dbReference type="KEGG" id="svo:SVI_0410"/>
<dbReference type="eggNOG" id="COG1925">
    <property type="taxonomic scope" value="Bacteria"/>
</dbReference>
<dbReference type="HOGENOM" id="CLU_136230_1_3_6"/>
<dbReference type="OrthoDB" id="9798965at2"/>
<dbReference type="Proteomes" id="UP000002350">
    <property type="component" value="Chromosome"/>
</dbReference>
<dbReference type="GO" id="GO:0005737">
    <property type="term" value="C:cytoplasm"/>
    <property type="evidence" value="ECO:0007669"/>
    <property type="project" value="UniProtKB-SubCell"/>
</dbReference>
<dbReference type="GO" id="GO:0009401">
    <property type="term" value="P:phosphoenolpyruvate-dependent sugar phosphotransferase system"/>
    <property type="evidence" value="ECO:0007669"/>
    <property type="project" value="UniProtKB-KW"/>
</dbReference>
<dbReference type="Gene3D" id="3.30.1340.10">
    <property type="entry name" value="HPr-like"/>
    <property type="match status" value="1"/>
</dbReference>
<dbReference type="InterPro" id="IPR050399">
    <property type="entry name" value="HPr"/>
</dbReference>
<dbReference type="InterPro" id="IPR000032">
    <property type="entry name" value="HPr-like"/>
</dbReference>
<dbReference type="InterPro" id="IPR035895">
    <property type="entry name" value="HPr-like_sf"/>
</dbReference>
<dbReference type="InterPro" id="IPR001020">
    <property type="entry name" value="PTS_HPr_His_P_site"/>
</dbReference>
<dbReference type="NCBIfam" id="TIGR01003">
    <property type="entry name" value="PTS_HPr_family"/>
    <property type="match status" value="1"/>
</dbReference>
<dbReference type="PANTHER" id="PTHR33705">
    <property type="entry name" value="PHOSPHOCARRIER PROTEIN HPR"/>
    <property type="match status" value="1"/>
</dbReference>
<dbReference type="PANTHER" id="PTHR33705:SF2">
    <property type="entry name" value="PHOSPHOCARRIER PROTEIN NPR"/>
    <property type="match status" value="1"/>
</dbReference>
<dbReference type="Pfam" id="PF00381">
    <property type="entry name" value="PTS-HPr"/>
    <property type="match status" value="1"/>
</dbReference>
<dbReference type="PRINTS" id="PR00107">
    <property type="entry name" value="PHOSPHOCPHPR"/>
</dbReference>
<dbReference type="SUPFAM" id="SSF55594">
    <property type="entry name" value="HPr-like"/>
    <property type="match status" value="1"/>
</dbReference>
<dbReference type="PROSITE" id="PS51350">
    <property type="entry name" value="PTS_HPR_DOM"/>
    <property type="match status" value="1"/>
</dbReference>
<dbReference type="PROSITE" id="PS00369">
    <property type="entry name" value="PTS_HPR_HIS"/>
    <property type="match status" value="1"/>
</dbReference>
<gene>
    <name type="primary">ptsO</name>
    <name type="ordered locus">SVI_0410</name>
</gene>
<feature type="chain" id="PRO_0000107895" description="Phosphocarrier protein NPr">
    <location>
        <begin position="1"/>
        <end position="91"/>
    </location>
</feature>
<feature type="domain" description="HPr" evidence="2">
    <location>
        <begin position="3"/>
        <end position="90"/>
    </location>
</feature>
<feature type="active site" description="Pros-phosphohistidine intermediate" evidence="2">
    <location>
        <position position="17"/>
    </location>
</feature>
<proteinExistence type="inferred from homology"/>
<reference key="1">
    <citation type="journal article" date="2000" name="Biochim. Biophys. Acta">
        <title>Cloning and characterization of the gene encoding RNA polymerase sigma factor 54 of deep-sea piezophilic Shewanella violacea.</title>
        <authorList>
            <person name="Ikegami A."/>
            <person name="Nakasone K."/>
            <person name="Fujita M."/>
            <person name="Fujii S."/>
            <person name="Kato C."/>
            <person name="Usami R."/>
            <person name="Horikoshi K."/>
        </authorList>
    </citation>
    <scope>NUCLEOTIDE SEQUENCE [GENOMIC DNA]</scope>
</reference>
<reference key="2">
    <citation type="journal article" date="2010" name="Mol. Biosyst.">
        <title>Complete genome sequence and comparative analysis of Shewanella violacea, a psychrophilic and piezophilic bacterium from deep sea floor sediments.</title>
        <authorList>
            <person name="Aono E."/>
            <person name="Baba T."/>
            <person name="Ara T."/>
            <person name="Nishi T."/>
            <person name="Nakamichi T."/>
            <person name="Inamoto E."/>
            <person name="Toyonaga H."/>
            <person name="Hasegawa M."/>
            <person name="Takai Y."/>
            <person name="Okumura Y."/>
            <person name="Baba M."/>
            <person name="Tomita M."/>
            <person name="Kato C."/>
            <person name="Oshima T."/>
            <person name="Nakasone K."/>
            <person name="Mori H."/>
        </authorList>
    </citation>
    <scope>NUCLEOTIDE SEQUENCE [LARGE SCALE GENOMIC DNA]</scope>
    <source>
        <strain>JCM 10179 / CIP 106290 / LMG 19151 / DSS12</strain>
    </source>
</reference>
<evidence type="ECO:0000250" key="1"/>
<evidence type="ECO:0000255" key="2">
    <source>
        <dbReference type="PROSITE-ProRule" id="PRU00681"/>
    </source>
</evidence>
<evidence type="ECO:0000305" key="3"/>
<comment type="function">
    <text evidence="1">Component of the phosphoenolpyruvate-dependent nitrogen-metabolic phosphotransferase system (nitrogen-metabolic PTS), that seems to be involved in regulating nitrogen metabolism. The phosphoryl group from phosphoenolpyruvate (PEP) is transferred to the phosphoryl carrier protein NPr by enzyme I-Ntr. Phospho-NPr then transfers it to EIIA-Ntr. Could function in the transcriptional regulation of sigma-54 dependent operons in conjunction with the NPr (PtsO) and EIIA-Ntr (PtsN) proteins.</text>
</comment>
<comment type="subcellular location">
    <subcellularLocation>
        <location evidence="3">Cytoplasm</location>
    </subcellularLocation>
</comment>
<comment type="similarity">
    <text evidence="3">Belongs to the HPr family.</text>
</comment>
<keyword id="KW-0963">Cytoplasm</keyword>
<keyword id="KW-0598">Phosphotransferase system</keyword>
<keyword id="KW-1185">Reference proteome</keyword>
<accession>Q9S0K8</accession>
<accession>D4ZF01</accession>